<accession>Q8Y2D9</accession>
<name>LOLB_RALN1</name>
<sequence>MATVFSRALGALVLGVACALLAGCASVRPANDLFAGTQDGDATITRYQGRFSARYVQDDAQQSAVGSFLWRERGADVQLELMSPLGQTLAIVSQNRQGATLELPNQPPRRAAEVDTLMQDALGFSLPVSGLRDWLRARPTPGTPARVARDAQSRPETIEQNGWTVHYVAWSDDGDNSTANARVRRLDLDRPQGAGGAPGPLSVRLVLDQ</sequence>
<evidence type="ECO:0000255" key="1">
    <source>
        <dbReference type="HAMAP-Rule" id="MF_00233"/>
    </source>
</evidence>
<dbReference type="EMBL" id="AL646052">
    <property type="protein sequence ID" value="CAD13925.1"/>
    <property type="molecule type" value="Genomic_DNA"/>
</dbReference>
<dbReference type="RefSeq" id="WP_011000359.1">
    <property type="nucleotide sequence ID" value="NC_003295.1"/>
</dbReference>
<dbReference type="SMR" id="Q8Y2D9"/>
<dbReference type="STRING" id="267608.RSc0397"/>
<dbReference type="TCDB" id="1.B.46.1.3">
    <property type="family name" value="the outer membrane lolab lipoprotein insertion apparatus (lolab) family"/>
</dbReference>
<dbReference type="EnsemblBacteria" id="CAD13925">
    <property type="protein sequence ID" value="CAD13925"/>
    <property type="gene ID" value="RSc0397"/>
</dbReference>
<dbReference type="KEGG" id="rso:RSc0397"/>
<dbReference type="eggNOG" id="COG3017">
    <property type="taxonomic scope" value="Bacteria"/>
</dbReference>
<dbReference type="HOGENOM" id="CLU_092816_3_0_4"/>
<dbReference type="Proteomes" id="UP000001436">
    <property type="component" value="Chromosome"/>
</dbReference>
<dbReference type="GO" id="GO:0009279">
    <property type="term" value="C:cell outer membrane"/>
    <property type="evidence" value="ECO:0007669"/>
    <property type="project" value="UniProtKB-SubCell"/>
</dbReference>
<dbReference type="GO" id="GO:0044874">
    <property type="term" value="P:lipoprotein localization to outer membrane"/>
    <property type="evidence" value="ECO:0007669"/>
    <property type="project" value="UniProtKB-UniRule"/>
</dbReference>
<dbReference type="GO" id="GO:0015031">
    <property type="term" value="P:protein transport"/>
    <property type="evidence" value="ECO:0007669"/>
    <property type="project" value="UniProtKB-KW"/>
</dbReference>
<dbReference type="CDD" id="cd16326">
    <property type="entry name" value="LolB"/>
    <property type="match status" value="1"/>
</dbReference>
<dbReference type="Gene3D" id="2.50.20.10">
    <property type="entry name" value="Lipoprotein localisation LolA/LolB/LppX"/>
    <property type="match status" value="1"/>
</dbReference>
<dbReference type="HAMAP" id="MF_00233">
    <property type="entry name" value="LolB"/>
    <property type="match status" value="1"/>
</dbReference>
<dbReference type="InterPro" id="IPR029046">
    <property type="entry name" value="LolA/LolB/LppX"/>
</dbReference>
<dbReference type="InterPro" id="IPR004565">
    <property type="entry name" value="OM_lipoprot_LolB"/>
</dbReference>
<dbReference type="NCBIfam" id="TIGR00548">
    <property type="entry name" value="lolB"/>
    <property type="match status" value="1"/>
</dbReference>
<dbReference type="Pfam" id="PF03550">
    <property type="entry name" value="LolB"/>
    <property type="match status" value="1"/>
</dbReference>
<dbReference type="SUPFAM" id="SSF89392">
    <property type="entry name" value="Prokaryotic lipoproteins and lipoprotein localization factors"/>
    <property type="match status" value="1"/>
</dbReference>
<dbReference type="PROSITE" id="PS51257">
    <property type="entry name" value="PROKAR_LIPOPROTEIN"/>
    <property type="match status" value="1"/>
</dbReference>
<gene>
    <name evidence="1" type="primary">lolB</name>
    <name type="ordered locus">RSc0397</name>
    <name type="ORF">RS03365</name>
</gene>
<protein>
    <recommendedName>
        <fullName evidence="1">Outer-membrane lipoprotein LolB</fullName>
    </recommendedName>
</protein>
<keyword id="KW-0998">Cell outer membrane</keyword>
<keyword id="KW-0143">Chaperone</keyword>
<keyword id="KW-0449">Lipoprotein</keyword>
<keyword id="KW-0472">Membrane</keyword>
<keyword id="KW-0564">Palmitate</keyword>
<keyword id="KW-0653">Protein transport</keyword>
<keyword id="KW-1185">Reference proteome</keyword>
<keyword id="KW-0732">Signal</keyword>
<keyword id="KW-0813">Transport</keyword>
<organism>
    <name type="scientific">Ralstonia nicotianae (strain ATCC BAA-1114 / GMI1000)</name>
    <name type="common">Ralstonia solanacearum</name>
    <dbReference type="NCBI Taxonomy" id="267608"/>
    <lineage>
        <taxon>Bacteria</taxon>
        <taxon>Pseudomonadati</taxon>
        <taxon>Pseudomonadota</taxon>
        <taxon>Betaproteobacteria</taxon>
        <taxon>Burkholderiales</taxon>
        <taxon>Burkholderiaceae</taxon>
        <taxon>Ralstonia</taxon>
        <taxon>Ralstonia solanacearum species complex</taxon>
    </lineage>
</organism>
<comment type="function">
    <text evidence="1">Plays a critical role in the incorporation of lipoproteins in the outer membrane after they are released by the LolA protein.</text>
</comment>
<comment type="subunit">
    <text evidence="1">Monomer.</text>
</comment>
<comment type="subcellular location">
    <subcellularLocation>
        <location evidence="1">Cell outer membrane</location>
        <topology evidence="1">Lipid-anchor</topology>
    </subcellularLocation>
</comment>
<comment type="similarity">
    <text evidence="1">Belongs to the LolB family.</text>
</comment>
<proteinExistence type="inferred from homology"/>
<reference key="1">
    <citation type="journal article" date="2002" name="Nature">
        <title>Genome sequence of the plant pathogen Ralstonia solanacearum.</title>
        <authorList>
            <person name="Salanoubat M."/>
            <person name="Genin S."/>
            <person name="Artiguenave F."/>
            <person name="Gouzy J."/>
            <person name="Mangenot S."/>
            <person name="Arlat M."/>
            <person name="Billault A."/>
            <person name="Brottier P."/>
            <person name="Camus J.-C."/>
            <person name="Cattolico L."/>
            <person name="Chandler M."/>
            <person name="Choisne N."/>
            <person name="Claudel-Renard C."/>
            <person name="Cunnac S."/>
            <person name="Demange N."/>
            <person name="Gaspin C."/>
            <person name="Lavie M."/>
            <person name="Moisan A."/>
            <person name="Robert C."/>
            <person name="Saurin W."/>
            <person name="Schiex T."/>
            <person name="Siguier P."/>
            <person name="Thebault P."/>
            <person name="Whalen M."/>
            <person name="Wincker P."/>
            <person name="Levy M."/>
            <person name="Weissenbach J."/>
            <person name="Boucher C.A."/>
        </authorList>
    </citation>
    <scope>NUCLEOTIDE SEQUENCE [LARGE SCALE GENOMIC DNA]</scope>
    <source>
        <strain>ATCC BAA-1114 / GMI1000</strain>
    </source>
</reference>
<feature type="signal peptide" evidence="1">
    <location>
        <begin position="1"/>
        <end position="17"/>
    </location>
</feature>
<feature type="chain" id="PRO_0000018309" description="Outer-membrane lipoprotein LolB">
    <location>
        <begin position="18"/>
        <end position="209"/>
    </location>
</feature>
<feature type="lipid moiety-binding region" description="N-palmitoyl cysteine" evidence="1">
    <location>
        <position position="18"/>
    </location>
</feature>
<feature type="lipid moiety-binding region" description="S-diacylglycerol cysteine" evidence="1">
    <location>
        <position position="18"/>
    </location>
</feature>